<reference key="1">
    <citation type="journal article" date="2007" name="PLoS ONE">
        <title>A glimpse of streptococcal toxic shock syndrome from comparative genomics of S. suis 2 Chinese isolates.</title>
        <authorList>
            <person name="Chen C."/>
            <person name="Tang J."/>
            <person name="Dong W."/>
            <person name="Wang C."/>
            <person name="Feng Y."/>
            <person name="Wang J."/>
            <person name="Zheng F."/>
            <person name="Pan X."/>
            <person name="Liu D."/>
            <person name="Li M."/>
            <person name="Song Y."/>
            <person name="Zhu X."/>
            <person name="Sun H."/>
            <person name="Feng T."/>
            <person name="Guo Z."/>
            <person name="Ju A."/>
            <person name="Ge J."/>
            <person name="Dong Y."/>
            <person name="Sun W."/>
            <person name="Jiang Y."/>
            <person name="Wang J."/>
            <person name="Yan J."/>
            <person name="Yang H."/>
            <person name="Wang X."/>
            <person name="Gao G.F."/>
            <person name="Yang R."/>
            <person name="Wang J."/>
            <person name="Yu J."/>
        </authorList>
    </citation>
    <scope>NUCLEOTIDE SEQUENCE [LARGE SCALE GENOMIC DNA]</scope>
    <source>
        <strain>05ZYH33</strain>
    </source>
</reference>
<dbReference type="EMBL" id="CP000407">
    <property type="protein sequence ID" value="ABP89302.1"/>
    <property type="molecule type" value="Genomic_DNA"/>
</dbReference>
<dbReference type="SMR" id="A4VT63"/>
<dbReference type="STRING" id="391295.SSU05_0334"/>
<dbReference type="KEGG" id="ssu:SSU05_0334"/>
<dbReference type="eggNOG" id="COG3343">
    <property type="taxonomic scope" value="Bacteria"/>
</dbReference>
<dbReference type="HOGENOM" id="CLU_116648_0_0_9"/>
<dbReference type="GO" id="GO:0000428">
    <property type="term" value="C:DNA-directed RNA polymerase complex"/>
    <property type="evidence" value="ECO:0007669"/>
    <property type="project" value="UniProtKB-KW"/>
</dbReference>
<dbReference type="GO" id="GO:0003899">
    <property type="term" value="F:DNA-directed RNA polymerase activity"/>
    <property type="evidence" value="ECO:0007669"/>
    <property type="project" value="UniProtKB-UniRule"/>
</dbReference>
<dbReference type="GO" id="GO:0006351">
    <property type="term" value="P:DNA-templated transcription"/>
    <property type="evidence" value="ECO:0007669"/>
    <property type="project" value="InterPro"/>
</dbReference>
<dbReference type="GO" id="GO:0006355">
    <property type="term" value="P:regulation of DNA-templated transcription"/>
    <property type="evidence" value="ECO:0007669"/>
    <property type="project" value="UniProtKB-UniRule"/>
</dbReference>
<dbReference type="Gene3D" id="1.10.10.1250">
    <property type="entry name" value="RNA polymerase, subunit delta, N-terminal domain"/>
    <property type="match status" value="1"/>
</dbReference>
<dbReference type="HAMAP" id="MF_00357">
    <property type="entry name" value="RNApol_bact_RpoE"/>
    <property type="match status" value="1"/>
</dbReference>
<dbReference type="InterPro" id="IPR007759">
    <property type="entry name" value="Asxl_HARE-HTH"/>
</dbReference>
<dbReference type="InterPro" id="IPR038087">
    <property type="entry name" value="RNAP_delta_N_dom_sf"/>
</dbReference>
<dbReference type="InterPro" id="IPR029757">
    <property type="entry name" value="RpoE"/>
</dbReference>
<dbReference type="NCBIfam" id="TIGR04567">
    <property type="entry name" value="RNAP_delt_lowGC"/>
    <property type="match status" value="1"/>
</dbReference>
<dbReference type="Pfam" id="PF05066">
    <property type="entry name" value="HARE-HTH"/>
    <property type="match status" value="1"/>
</dbReference>
<dbReference type="PROSITE" id="PS51913">
    <property type="entry name" value="HTH_HARE"/>
    <property type="match status" value="1"/>
</dbReference>
<name>RPOE_STRSY</name>
<keyword id="KW-0240">DNA-directed RNA polymerase</keyword>
<keyword id="KW-0548">Nucleotidyltransferase</keyword>
<keyword id="KW-0804">Transcription</keyword>
<keyword id="KW-0808">Transferase</keyword>
<proteinExistence type="inferred from homology"/>
<comment type="function">
    <text evidence="1">Participates in both the initiation and recycling phases of transcription. In the presence of the delta subunit, RNAP displays an increased specificity of transcription, a decreased affinity for nucleic acids, and an increased efficiency of RNA synthesis because of enhanced recycling.</text>
</comment>
<comment type="subunit">
    <text evidence="1">RNAP is composed of a core of 2 alpha, a beta and a beta' subunits. The core is associated with a delta subunit and one of several sigma factors.</text>
</comment>
<comment type="similarity">
    <text evidence="1">Belongs to the RpoE family.</text>
</comment>
<feature type="chain" id="PRO_0000303145" description="Probable DNA-directed RNA polymerase subunit delta">
    <location>
        <begin position="1"/>
        <end position="193"/>
    </location>
</feature>
<feature type="domain" description="HTH HARE-type" evidence="2">
    <location>
        <begin position="14"/>
        <end position="83"/>
    </location>
</feature>
<feature type="region of interest" description="Disordered" evidence="3">
    <location>
        <begin position="117"/>
        <end position="193"/>
    </location>
</feature>
<feature type="compositionally biased region" description="Acidic residues" evidence="3">
    <location>
        <begin position="117"/>
        <end position="134"/>
    </location>
</feature>
<feature type="compositionally biased region" description="Acidic residues" evidence="3">
    <location>
        <begin position="142"/>
        <end position="193"/>
    </location>
</feature>
<accession>A4VT63</accession>
<evidence type="ECO:0000255" key="1">
    <source>
        <dbReference type="HAMAP-Rule" id="MF_00357"/>
    </source>
</evidence>
<evidence type="ECO:0000255" key="2">
    <source>
        <dbReference type="PROSITE-ProRule" id="PRU01261"/>
    </source>
</evidence>
<evidence type="ECO:0000256" key="3">
    <source>
        <dbReference type="SAM" id="MobiDB-lite"/>
    </source>
</evidence>
<protein>
    <recommendedName>
        <fullName evidence="1">Probable DNA-directed RNA polymerase subunit delta</fullName>
    </recommendedName>
    <alternativeName>
        <fullName evidence="1">RNAP delta factor</fullName>
    </alternativeName>
</protein>
<organism>
    <name type="scientific">Streptococcus suis (strain 05ZYH33)</name>
    <dbReference type="NCBI Taxonomy" id="391295"/>
    <lineage>
        <taxon>Bacteria</taxon>
        <taxon>Bacillati</taxon>
        <taxon>Bacillota</taxon>
        <taxon>Bacilli</taxon>
        <taxon>Lactobacillales</taxon>
        <taxon>Streptococcaceae</taxon>
        <taxon>Streptococcus</taxon>
    </lineage>
</organism>
<sequence length="193" mass="22277">MELNVFAGQEKSELSMIEVARAILEERGRDNEMYFNDLVNEIQNYLEKSNSEIRAALPTFYSDLNVDGSFIPLGENKWGLRSWYAIDEIDEEVITLEEDDEDAPKRKKKRVNAFMDGDDDAIDYGHDDPEDEDNYPGSVSSEYDDENPDDEKDEVESYDSEINEIIPDDELDEEDVDLGEDDDEYSDEEVVDE</sequence>
<gene>
    <name evidence="1" type="primary">rpoE</name>
    <name type="ordered locus">SSU05_0334</name>
</gene>